<gene>
    <name type="ordered locus">Ssed_1809</name>
</gene>
<keyword id="KW-1185">Reference proteome</keyword>
<reference key="1">
    <citation type="submission" date="2007-08" db="EMBL/GenBank/DDBJ databases">
        <title>Complete sequence of Shewanella sediminis HAW-EB3.</title>
        <authorList>
            <consortium name="US DOE Joint Genome Institute"/>
            <person name="Copeland A."/>
            <person name="Lucas S."/>
            <person name="Lapidus A."/>
            <person name="Barry K."/>
            <person name="Glavina del Rio T."/>
            <person name="Dalin E."/>
            <person name="Tice H."/>
            <person name="Pitluck S."/>
            <person name="Chertkov O."/>
            <person name="Brettin T."/>
            <person name="Bruce D."/>
            <person name="Detter J.C."/>
            <person name="Han C."/>
            <person name="Schmutz J."/>
            <person name="Larimer F."/>
            <person name="Land M."/>
            <person name="Hauser L."/>
            <person name="Kyrpides N."/>
            <person name="Kim E."/>
            <person name="Zhao J.-S."/>
            <person name="Richardson P."/>
        </authorList>
    </citation>
    <scope>NUCLEOTIDE SEQUENCE [LARGE SCALE GENOMIC DNA]</scope>
    <source>
        <strain>HAW-EB3</strain>
    </source>
</reference>
<name>Y1809_SHESH</name>
<feature type="chain" id="PRO_1000083823" description="UPF0352 protein Ssed_1809">
    <location>
        <begin position="1"/>
        <end position="71"/>
    </location>
</feature>
<protein>
    <recommendedName>
        <fullName evidence="1">UPF0352 protein Ssed_1809</fullName>
    </recommendedName>
</protein>
<accession>A8FU97</accession>
<evidence type="ECO:0000255" key="1">
    <source>
        <dbReference type="HAMAP-Rule" id="MF_00816"/>
    </source>
</evidence>
<comment type="similarity">
    <text evidence="1">Belongs to the UPF0352 family.</text>
</comment>
<proteinExistence type="inferred from homology"/>
<dbReference type="EMBL" id="CP000821">
    <property type="protein sequence ID" value="ABV36420.1"/>
    <property type="molecule type" value="Genomic_DNA"/>
</dbReference>
<dbReference type="RefSeq" id="WP_012142156.1">
    <property type="nucleotide sequence ID" value="NC_009831.1"/>
</dbReference>
<dbReference type="SMR" id="A8FU97"/>
<dbReference type="STRING" id="425104.Ssed_1809"/>
<dbReference type="KEGG" id="sse:Ssed_1809"/>
<dbReference type="eggNOG" id="COG3082">
    <property type="taxonomic scope" value="Bacteria"/>
</dbReference>
<dbReference type="HOGENOM" id="CLU_175457_0_0_6"/>
<dbReference type="OrthoDB" id="5771474at2"/>
<dbReference type="Proteomes" id="UP000002015">
    <property type="component" value="Chromosome"/>
</dbReference>
<dbReference type="Gene3D" id="1.10.3390.10">
    <property type="entry name" value="YejL-like"/>
    <property type="match status" value="1"/>
</dbReference>
<dbReference type="HAMAP" id="MF_00816">
    <property type="entry name" value="UPF0352"/>
    <property type="match status" value="1"/>
</dbReference>
<dbReference type="InterPro" id="IPR009857">
    <property type="entry name" value="UPF0352"/>
</dbReference>
<dbReference type="InterPro" id="IPR023202">
    <property type="entry name" value="YejL_sf"/>
</dbReference>
<dbReference type="NCBIfam" id="NF010242">
    <property type="entry name" value="PRK13689.1"/>
    <property type="match status" value="1"/>
</dbReference>
<dbReference type="Pfam" id="PF07208">
    <property type="entry name" value="DUF1414"/>
    <property type="match status" value="1"/>
</dbReference>
<dbReference type="PIRSF" id="PIRSF006188">
    <property type="entry name" value="UCP006188"/>
    <property type="match status" value="1"/>
</dbReference>
<dbReference type="SUPFAM" id="SSF158651">
    <property type="entry name" value="YejL-like"/>
    <property type="match status" value="1"/>
</dbReference>
<sequence>MAIQSKYSNTQVESIIAEVSAVLDKHQAPTDLRLMVLGNCVTDLLARKVPQEARAAVAEQFSKALAQSVKG</sequence>
<organism>
    <name type="scientific">Shewanella sediminis (strain HAW-EB3)</name>
    <dbReference type="NCBI Taxonomy" id="425104"/>
    <lineage>
        <taxon>Bacteria</taxon>
        <taxon>Pseudomonadati</taxon>
        <taxon>Pseudomonadota</taxon>
        <taxon>Gammaproteobacteria</taxon>
        <taxon>Alteromonadales</taxon>
        <taxon>Shewanellaceae</taxon>
        <taxon>Shewanella</taxon>
    </lineage>
</organism>